<feature type="signal peptide" evidence="2">
    <location>
        <begin position="1"/>
        <end position="19"/>
    </location>
</feature>
<feature type="chain" id="PRO_0000050604" description="Probable 5-hydroxyisourate hydrolase ZK697.8">
    <location>
        <begin position="20"/>
        <end position="136"/>
    </location>
</feature>
<feature type="binding site" evidence="1">
    <location>
        <position position="31"/>
    </location>
    <ligand>
        <name>substrate</name>
    </ligand>
</feature>
<feature type="binding site" evidence="1">
    <location>
        <position position="69"/>
    </location>
    <ligand>
        <name>substrate</name>
    </ligand>
</feature>
<feature type="binding site" evidence="1">
    <location>
        <position position="133"/>
    </location>
    <ligand>
        <name>substrate</name>
    </ligand>
</feature>
<gene>
    <name type="ORF">ZK697.8</name>
</gene>
<organism>
    <name type="scientific">Caenorhabditis elegans</name>
    <dbReference type="NCBI Taxonomy" id="6239"/>
    <lineage>
        <taxon>Eukaryota</taxon>
        <taxon>Metazoa</taxon>
        <taxon>Ecdysozoa</taxon>
        <taxon>Nematoda</taxon>
        <taxon>Chromadorea</taxon>
        <taxon>Rhabditida</taxon>
        <taxon>Rhabditina</taxon>
        <taxon>Rhabditomorpha</taxon>
        <taxon>Rhabditoidea</taxon>
        <taxon>Rhabditidae</taxon>
        <taxon>Peloderinae</taxon>
        <taxon>Caenorhabditis</taxon>
    </lineage>
</organism>
<reference key="1">
    <citation type="journal article" date="1998" name="Science">
        <title>Genome sequence of the nematode C. elegans: a platform for investigating biology.</title>
        <authorList>
            <consortium name="The C. elegans sequencing consortium"/>
        </authorList>
    </citation>
    <scope>NUCLEOTIDE SEQUENCE [LARGE SCALE GENOMIC DNA]</scope>
    <source>
        <strain>Bristol N2</strain>
    </source>
</reference>
<accession>O44578</accession>
<dbReference type="EC" id="3.5.2.17"/>
<dbReference type="EMBL" id="FO081798">
    <property type="protein sequence ID" value="CCD74369.1"/>
    <property type="molecule type" value="Genomic_DNA"/>
</dbReference>
<dbReference type="PIR" id="D88957">
    <property type="entry name" value="D88957"/>
</dbReference>
<dbReference type="RefSeq" id="NP_503496.2">
    <property type="nucleotide sequence ID" value="NM_071095.2"/>
</dbReference>
<dbReference type="SMR" id="O44578"/>
<dbReference type="FunCoup" id="O44578">
    <property type="interactions" value="88"/>
</dbReference>
<dbReference type="STRING" id="6239.ZK697.8.1"/>
<dbReference type="PaxDb" id="6239-ZK697.8"/>
<dbReference type="PeptideAtlas" id="O44578"/>
<dbReference type="EnsemblMetazoa" id="ZK697.8.1">
    <property type="protein sequence ID" value="ZK697.8.1"/>
    <property type="gene ID" value="WBGene00022808"/>
</dbReference>
<dbReference type="GeneID" id="191414"/>
<dbReference type="KEGG" id="cel:CELE_ZK697.8"/>
<dbReference type="UCSC" id="ZK697.8">
    <property type="organism name" value="c. elegans"/>
</dbReference>
<dbReference type="AGR" id="WB:WBGene00022808"/>
<dbReference type="CTD" id="191414"/>
<dbReference type="WormBase" id="ZK697.8">
    <property type="protein sequence ID" value="CE40007"/>
    <property type="gene ID" value="WBGene00022808"/>
</dbReference>
<dbReference type="eggNOG" id="KOG3006">
    <property type="taxonomic scope" value="Eukaryota"/>
</dbReference>
<dbReference type="GeneTree" id="ENSGT00940000153229"/>
<dbReference type="HOGENOM" id="CLU_115536_1_0_1"/>
<dbReference type="InParanoid" id="O44578"/>
<dbReference type="OMA" id="CSENQNY"/>
<dbReference type="OrthoDB" id="10265230at2759"/>
<dbReference type="PhylomeDB" id="O44578"/>
<dbReference type="Reactome" id="R-CEL-3000171">
    <property type="pathway name" value="Non-integrin membrane-ECM interactions"/>
</dbReference>
<dbReference type="Reactome" id="R-CEL-6798695">
    <property type="pathway name" value="Neutrophil degranulation"/>
</dbReference>
<dbReference type="Reactome" id="R-CEL-975634">
    <property type="pathway name" value="Retinoid metabolism and transport"/>
</dbReference>
<dbReference type="PRO" id="PR:O44578"/>
<dbReference type="Proteomes" id="UP000001940">
    <property type="component" value="Chromosome V"/>
</dbReference>
<dbReference type="GO" id="GO:0033971">
    <property type="term" value="F:hydroxyisourate hydrolase activity"/>
    <property type="evidence" value="ECO:0007669"/>
    <property type="project" value="UniProtKB-EC"/>
</dbReference>
<dbReference type="GO" id="GO:0006144">
    <property type="term" value="P:purine nucleobase metabolic process"/>
    <property type="evidence" value="ECO:0000318"/>
    <property type="project" value="GO_Central"/>
</dbReference>
<dbReference type="CDD" id="cd05822">
    <property type="entry name" value="TLP_HIUase"/>
    <property type="match status" value="1"/>
</dbReference>
<dbReference type="FunFam" id="2.60.40.180:FF:000011">
    <property type="entry name" value="Probable 5-hydroxyisourate hydrolase R09H10.3"/>
    <property type="match status" value="1"/>
</dbReference>
<dbReference type="Gene3D" id="2.60.40.180">
    <property type="entry name" value="Transthyretin/hydroxyisourate hydrolase domain"/>
    <property type="match status" value="1"/>
</dbReference>
<dbReference type="InterPro" id="IPR014306">
    <property type="entry name" value="Hydroxyisourate_hydrolase"/>
</dbReference>
<dbReference type="InterPro" id="IPR023418">
    <property type="entry name" value="Thyroxine_BS"/>
</dbReference>
<dbReference type="InterPro" id="IPR000895">
    <property type="entry name" value="Transthyretin/HIU_hydrolase"/>
</dbReference>
<dbReference type="InterPro" id="IPR023416">
    <property type="entry name" value="Transthyretin/HIU_hydrolase_d"/>
</dbReference>
<dbReference type="InterPro" id="IPR036817">
    <property type="entry name" value="Transthyretin/HIU_hydrolase_sf"/>
</dbReference>
<dbReference type="InterPro" id="IPR023419">
    <property type="entry name" value="Transthyretin_CS"/>
</dbReference>
<dbReference type="NCBIfam" id="TIGR02962">
    <property type="entry name" value="hdxy_isourate"/>
    <property type="match status" value="1"/>
</dbReference>
<dbReference type="PANTHER" id="PTHR10395:SF7">
    <property type="entry name" value="5-HYDROXYISOURATE HYDROLASE"/>
    <property type="match status" value="1"/>
</dbReference>
<dbReference type="PANTHER" id="PTHR10395">
    <property type="entry name" value="URICASE AND TRANSTHYRETIN-RELATED"/>
    <property type="match status" value="1"/>
</dbReference>
<dbReference type="Pfam" id="PF00576">
    <property type="entry name" value="Transthyretin"/>
    <property type="match status" value="1"/>
</dbReference>
<dbReference type="PRINTS" id="PR00189">
    <property type="entry name" value="TRNSTHYRETIN"/>
</dbReference>
<dbReference type="SUPFAM" id="SSF49472">
    <property type="entry name" value="Transthyretin (synonym: prealbumin)"/>
    <property type="match status" value="1"/>
</dbReference>
<dbReference type="PROSITE" id="PS00768">
    <property type="entry name" value="TRANSTHYRETIN_1"/>
    <property type="match status" value="1"/>
</dbReference>
<dbReference type="PROSITE" id="PS00769">
    <property type="entry name" value="TRANSTHYRETIN_2"/>
    <property type="match status" value="1"/>
</dbReference>
<name>HIUH2_CAEEL</name>
<evidence type="ECO:0000250" key="1"/>
<evidence type="ECO:0000255" key="2"/>
<evidence type="ECO:0000305" key="3"/>
<comment type="function">
    <text evidence="1">Catalyzes the hydrolysis of 5-hydroxyisourate (HIU) to 2-oxo-4-hydroxy-4-carboxy-5-ureidoimidazoline (OHCU).</text>
</comment>
<comment type="catalytic activity">
    <reaction>
        <text>5-hydroxyisourate + H2O = 5-hydroxy-2-oxo-4-ureido-2,5-dihydro-1H-imidazole-5-carboxylate + H(+)</text>
        <dbReference type="Rhea" id="RHEA:23736"/>
        <dbReference type="ChEBI" id="CHEBI:15377"/>
        <dbReference type="ChEBI" id="CHEBI:15378"/>
        <dbReference type="ChEBI" id="CHEBI:18072"/>
        <dbReference type="ChEBI" id="CHEBI:58639"/>
        <dbReference type="EC" id="3.5.2.17"/>
    </reaction>
</comment>
<comment type="subunit">
    <text evidence="1">Homotetramer.</text>
</comment>
<comment type="miscellaneous">
    <text>HIU hydrolysis also occurs spontaneously, but more slowly.</text>
</comment>
<comment type="similarity">
    <text evidence="3">Belongs to the transthyretin family. 5-hydroxyisourate hydrolase subfamily.</text>
</comment>
<keyword id="KW-0378">Hydrolase</keyword>
<keyword id="KW-0659">Purine metabolism</keyword>
<keyword id="KW-1185">Reference proteome</keyword>
<keyword id="KW-0732">Signal</keyword>
<sequence>MIKFLLFLAIAAATVISNAELAVPTASISAHVLDISGGSPAGGIQILAFILLNNGWTNIGSQFTQDNGRVDWVSPDFTLIPGTYRLVYITEPYYTAKNVESFYPYVEVVFNIRNATQHYHVPLTLSPWGYSTYRGS</sequence>
<protein>
    <recommendedName>
        <fullName>Probable 5-hydroxyisourate hydrolase ZK697.8</fullName>
        <shortName>HIU hydrolase</shortName>
        <shortName>HIUHase</shortName>
        <ecNumber>3.5.2.17</ecNumber>
    </recommendedName>
    <alternativeName>
        <fullName>Transthyretin-like protein ZK697.8</fullName>
    </alternativeName>
</protein>
<proteinExistence type="inferred from homology"/>